<gene>
    <name evidence="8" type="primary">CALHM4</name>
    <name type="synonym">C6orf78</name>
    <name type="synonym">FAM26D</name>
    <name type="ORF">UNQ6481/PRO21277</name>
</gene>
<name>CAHM4_HUMAN</name>
<accession>Q5JW98</accession>
<accession>B0QZ25</accession>
<accession>B0QZ27</accession>
<accession>B4DTQ0</accession>
<accession>Q96MK0</accession>
<organism>
    <name type="scientific">Homo sapiens</name>
    <name type="common">Human</name>
    <dbReference type="NCBI Taxonomy" id="9606"/>
    <lineage>
        <taxon>Eukaryota</taxon>
        <taxon>Metazoa</taxon>
        <taxon>Chordata</taxon>
        <taxon>Craniata</taxon>
        <taxon>Vertebrata</taxon>
        <taxon>Euteleostomi</taxon>
        <taxon>Mammalia</taxon>
        <taxon>Eutheria</taxon>
        <taxon>Euarchontoglires</taxon>
        <taxon>Primates</taxon>
        <taxon>Haplorrhini</taxon>
        <taxon>Catarrhini</taxon>
        <taxon>Hominidae</taxon>
        <taxon>Homo</taxon>
    </lineage>
</organism>
<evidence type="ECO:0000255" key="1"/>
<evidence type="ECO:0000269" key="2">
    <source>
    </source>
</evidence>
<evidence type="ECO:0000303" key="3">
    <source>
    </source>
</evidence>
<evidence type="ECO:0000303" key="4">
    <source>
    </source>
</evidence>
<evidence type="ECO:0000303" key="5">
    <source>
    </source>
</evidence>
<evidence type="ECO:0000305" key="6"/>
<evidence type="ECO:0000305" key="7">
    <source>
    </source>
</evidence>
<evidence type="ECO:0000312" key="8">
    <source>
        <dbReference type="HGNC" id="HGNC:21094"/>
    </source>
</evidence>
<evidence type="ECO:0007744" key="9">
    <source>
        <dbReference type="PDB" id="6YTK"/>
    </source>
</evidence>
<evidence type="ECO:0007829" key="10">
    <source>
        <dbReference type="PDB" id="8RMM"/>
    </source>
</evidence>
<protein>
    <recommendedName>
        <fullName>Calcium homeostasis modulator protein 4</fullName>
    </recommendedName>
    <alternativeName>
        <fullName>Protein FAM26D</fullName>
    </alternativeName>
</protein>
<reference key="1">
    <citation type="journal article" date="2003" name="Genome Res.">
        <title>The secreted protein discovery initiative (SPDI), a large-scale effort to identify novel human secreted and transmembrane proteins: a bioinformatics assessment.</title>
        <authorList>
            <person name="Clark H.F."/>
            <person name="Gurney A.L."/>
            <person name="Abaya E."/>
            <person name="Baker K."/>
            <person name="Baldwin D.T."/>
            <person name="Brush J."/>
            <person name="Chen J."/>
            <person name="Chow B."/>
            <person name="Chui C."/>
            <person name="Crowley C."/>
            <person name="Currell B."/>
            <person name="Deuel B."/>
            <person name="Dowd P."/>
            <person name="Eaton D."/>
            <person name="Foster J.S."/>
            <person name="Grimaldi C."/>
            <person name="Gu Q."/>
            <person name="Hass P.E."/>
            <person name="Heldens S."/>
            <person name="Huang A."/>
            <person name="Kim H.S."/>
            <person name="Klimowski L."/>
            <person name="Jin Y."/>
            <person name="Johnson S."/>
            <person name="Lee J."/>
            <person name="Lewis L."/>
            <person name="Liao D."/>
            <person name="Mark M.R."/>
            <person name="Robbie E."/>
            <person name="Sanchez C."/>
            <person name="Schoenfeld J."/>
            <person name="Seshagiri S."/>
            <person name="Simmons L."/>
            <person name="Singh J."/>
            <person name="Smith V."/>
            <person name="Stinson J."/>
            <person name="Vagts A."/>
            <person name="Vandlen R.L."/>
            <person name="Watanabe C."/>
            <person name="Wieand D."/>
            <person name="Woods K."/>
            <person name="Xie M.-H."/>
            <person name="Yansura D.G."/>
            <person name="Yi S."/>
            <person name="Yu G."/>
            <person name="Yuan J."/>
            <person name="Zhang M."/>
            <person name="Zhang Z."/>
            <person name="Goddard A.D."/>
            <person name="Wood W.I."/>
            <person name="Godowski P.J."/>
            <person name="Gray A.M."/>
        </authorList>
    </citation>
    <scope>NUCLEOTIDE SEQUENCE [LARGE SCALE MRNA] (ISOFORM 2)</scope>
</reference>
<reference key="2">
    <citation type="journal article" date="2004" name="Nat. Genet.">
        <title>Complete sequencing and characterization of 21,243 full-length human cDNAs.</title>
        <authorList>
            <person name="Ota T."/>
            <person name="Suzuki Y."/>
            <person name="Nishikawa T."/>
            <person name="Otsuki T."/>
            <person name="Sugiyama T."/>
            <person name="Irie R."/>
            <person name="Wakamatsu A."/>
            <person name="Hayashi K."/>
            <person name="Sato H."/>
            <person name="Nagai K."/>
            <person name="Kimura K."/>
            <person name="Makita H."/>
            <person name="Sekine M."/>
            <person name="Obayashi M."/>
            <person name="Nishi T."/>
            <person name="Shibahara T."/>
            <person name="Tanaka T."/>
            <person name="Ishii S."/>
            <person name="Yamamoto J."/>
            <person name="Saito K."/>
            <person name="Kawai Y."/>
            <person name="Isono Y."/>
            <person name="Nakamura Y."/>
            <person name="Nagahari K."/>
            <person name="Murakami K."/>
            <person name="Yasuda T."/>
            <person name="Iwayanagi T."/>
            <person name="Wagatsuma M."/>
            <person name="Shiratori A."/>
            <person name="Sudo H."/>
            <person name="Hosoiri T."/>
            <person name="Kaku Y."/>
            <person name="Kodaira H."/>
            <person name="Kondo H."/>
            <person name="Sugawara M."/>
            <person name="Takahashi M."/>
            <person name="Kanda K."/>
            <person name="Yokoi T."/>
            <person name="Furuya T."/>
            <person name="Kikkawa E."/>
            <person name="Omura Y."/>
            <person name="Abe K."/>
            <person name="Kamihara K."/>
            <person name="Katsuta N."/>
            <person name="Sato K."/>
            <person name="Tanikawa M."/>
            <person name="Yamazaki M."/>
            <person name="Ninomiya K."/>
            <person name="Ishibashi T."/>
            <person name="Yamashita H."/>
            <person name="Murakawa K."/>
            <person name="Fujimori K."/>
            <person name="Tanai H."/>
            <person name="Kimata M."/>
            <person name="Watanabe M."/>
            <person name="Hiraoka S."/>
            <person name="Chiba Y."/>
            <person name="Ishida S."/>
            <person name="Ono Y."/>
            <person name="Takiguchi S."/>
            <person name="Watanabe S."/>
            <person name="Yosida M."/>
            <person name="Hotuta T."/>
            <person name="Kusano J."/>
            <person name="Kanehori K."/>
            <person name="Takahashi-Fujii A."/>
            <person name="Hara H."/>
            <person name="Tanase T.-O."/>
            <person name="Nomura Y."/>
            <person name="Togiya S."/>
            <person name="Komai F."/>
            <person name="Hara R."/>
            <person name="Takeuchi K."/>
            <person name="Arita M."/>
            <person name="Imose N."/>
            <person name="Musashino K."/>
            <person name="Yuuki H."/>
            <person name="Oshima A."/>
            <person name="Sasaki N."/>
            <person name="Aotsuka S."/>
            <person name="Yoshikawa Y."/>
            <person name="Matsunawa H."/>
            <person name="Ichihara T."/>
            <person name="Shiohata N."/>
            <person name="Sano S."/>
            <person name="Moriya S."/>
            <person name="Momiyama H."/>
            <person name="Satoh N."/>
            <person name="Takami S."/>
            <person name="Terashima Y."/>
            <person name="Suzuki O."/>
            <person name="Nakagawa S."/>
            <person name="Senoh A."/>
            <person name="Mizoguchi H."/>
            <person name="Goto Y."/>
            <person name="Shimizu F."/>
            <person name="Wakebe H."/>
            <person name="Hishigaki H."/>
            <person name="Watanabe T."/>
            <person name="Sugiyama A."/>
            <person name="Takemoto M."/>
            <person name="Kawakami B."/>
            <person name="Yamazaki M."/>
            <person name="Watanabe K."/>
            <person name="Kumagai A."/>
            <person name="Itakura S."/>
            <person name="Fukuzumi Y."/>
            <person name="Fujimori Y."/>
            <person name="Komiyama M."/>
            <person name="Tashiro H."/>
            <person name="Tanigami A."/>
            <person name="Fujiwara T."/>
            <person name="Ono T."/>
            <person name="Yamada K."/>
            <person name="Fujii Y."/>
            <person name="Ozaki K."/>
            <person name="Hirao M."/>
            <person name="Ohmori Y."/>
            <person name="Kawabata A."/>
            <person name="Hikiji T."/>
            <person name="Kobatake N."/>
            <person name="Inagaki H."/>
            <person name="Ikema Y."/>
            <person name="Okamoto S."/>
            <person name="Okitani R."/>
            <person name="Kawakami T."/>
            <person name="Noguchi S."/>
            <person name="Itoh T."/>
            <person name="Shigeta K."/>
            <person name="Senba T."/>
            <person name="Matsumura K."/>
            <person name="Nakajima Y."/>
            <person name="Mizuno T."/>
            <person name="Morinaga M."/>
            <person name="Sasaki M."/>
            <person name="Togashi T."/>
            <person name="Oyama M."/>
            <person name="Hata H."/>
            <person name="Watanabe M."/>
            <person name="Komatsu T."/>
            <person name="Mizushima-Sugano J."/>
            <person name="Satoh T."/>
            <person name="Shirai Y."/>
            <person name="Takahashi Y."/>
            <person name="Nakagawa K."/>
            <person name="Okumura K."/>
            <person name="Nagase T."/>
            <person name="Nomura N."/>
            <person name="Kikuchi H."/>
            <person name="Masuho Y."/>
            <person name="Yamashita R."/>
            <person name="Nakai K."/>
            <person name="Yada T."/>
            <person name="Nakamura Y."/>
            <person name="Ohara O."/>
            <person name="Isogai T."/>
            <person name="Sugano S."/>
        </authorList>
    </citation>
    <scope>NUCLEOTIDE SEQUENCE [LARGE SCALE MRNA] (ISOFORMS 2 AND 4)</scope>
    <source>
        <tissue>Placenta</tissue>
    </source>
</reference>
<reference key="3">
    <citation type="journal article" date="2003" name="Nature">
        <title>The DNA sequence and analysis of human chromosome 6.</title>
        <authorList>
            <person name="Mungall A.J."/>
            <person name="Palmer S.A."/>
            <person name="Sims S.K."/>
            <person name="Edwards C.A."/>
            <person name="Ashurst J.L."/>
            <person name="Wilming L."/>
            <person name="Jones M.C."/>
            <person name="Horton R."/>
            <person name="Hunt S.E."/>
            <person name="Scott C.E."/>
            <person name="Gilbert J.G.R."/>
            <person name="Clamp M.E."/>
            <person name="Bethel G."/>
            <person name="Milne S."/>
            <person name="Ainscough R."/>
            <person name="Almeida J.P."/>
            <person name="Ambrose K.D."/>
            <person name="Andrews T.D."/>
            <person name="Ashwell R.I.S."/>
            <person name="Babbage A.K."/>
            <person name="Bagguley C.L."/>
            <person name="Bailey J."/>
            <person name="Banerjee R."/>
            <person name="Barker D.J."/>
            <person name="Barlow K.F."/>
            <person name="Bates K."/>
            <person name="Beare D.M."/>
            <person name="Beasley H."/>
            <person name="Beasley O."/>
            <person name="Bird C.P."/>
            <person name="Blakey S.E."/>
            <person name="Bray-Allen S."/>
            <person name="Brook J."/>
            <person name="Brown A.J."/>
            <person name="Brown J.Y."/>
            <person name="Burford D.C."/>
            <person name="Burrill W."/>
            <person name="Burton J."/>
            <person name="Carder C."/>
            <person name="Carter N.P."/>
            <person name="Chapman J.C."/>
            <person name="Clark S.Y."/>
            <person name="Clark G."/>
            <person name="Clee C.M."/>
            <person name="Clegg S."/>
            <person name="Cobley V."/>
            <person name="Collier R.E."/>
            <person name="Collins J.E."/>
            <person name="Colman L.K."/>
            <person name="Corby N.R."/>
            <person name="Coville G.J."/>
            <person name="Culley K.M."/>
            <person name="Dhami P."/>
            <person name="Davies J."/>
            <person name="Dunn M."/>
            <person name="Earthrowl M.E."/>
            <person name="Ellington A.E."/>
            <person name="Evans K.A."/>
            <person name="Faulkner L."/>
            <person name="Francis M.D."/>
            <person name="Frankish A."/>
            <person name="Frankland J."/>
            <person name="French L."/>
            <person name="Garner P."/>
            <person name="Garnett J."/>
            <person name="Ghori M.J."/>
            <person name="Gilby L.M."/>
            <person name="Gillson C.J."/>
            <person name="Glithero R.J."/>
            <person name="Grafham D.V."/>
            <person name="Grant M."/>
            <person name="Gribble S."/>
            <person name="Griffiths C."/>
            <person name="Griffiths M.N.D."/>
            <person name="Hall R."/>
            <person name="Halls K.S."/>
            <person name="Hammond S."/>
            <person name="Harley J.L."/>
            <person name="Hart E.A."/>
            <person name="Heath P.D."/>
            <person name="Heathcott R."/>
            <person name="Holmes S.J."/>
            <person name="Howden P.J."/>
            <person name="Howe K.L."/>
            <person name="Howell G.R."/>
            <person name="Huckle E."/>
            <person name="Humphray S.J."/>
            <person name="Humphries M.D."/>
            <person name="Hunt A.R."/>
            <person name="Johnson C.M."/>
            <person name="Joy A.A."/>
            <person name="Kay M."/>
            <person name="Keenan S.J."/>
            <person name="Kimberley A.M."/>
            <person name="King A."/>
            <person name="Laird G.K."/>
            <person name="Langford C."/>
            <person name="Lawlor S."/>
            <person name="Leongamornlert D.A."/>
            <person name="Leversha M."/>
            <person name="Lloyd C.R."/>
            <person name="Lloyd D.M."/>
            <person name="Loveland J.E."/>
            <person name="Lovell J."/>
            <person name="Martin S."/>
            <person name="Mashreghi-Mohammadi M."/>
            <person name="Maslen G.L."/>
            <person name="Matthews L."/>
            <person name="McCann O.T."/>
            <person name="McLaren S.J."/>
            <person name="McLay K."/>
            <person name="McMurray A."/>
            <person name="Moore M.J.F."/>
            <person name="Mullikin J.C."/>
            <person name="Niblett D."/>
            <person name="Nickerson T."/>
            <person name="Novik K.L."/>
            <person name="Oliver K."/>
            <person name="Overton-Larty E.K."/>
            <person name="Parker A."/>
            <person name="Patel R."/>
            <person name="Pearce A.V."/>
            <person name="Peck A.I."/>
            <person name="Phillimore B.J.C.T."/>
            <person name="Phillips S."/>
            <person name="Plumb R.W."/>
            <person name="Porter K.M."/>
            <person name="Ramsey Y."/>
            <person name="Ranby S.A."/>
            <person name="Rice C.M."/>
            <person name="Ross M.T."/>
            <person name="Searle S.M."/>
            <person name="Sehra H.K."/>
            <person name="Sheridan E."/>
            <person name="Skuce C.D."/>
            <person name="Smith S."/>
            <person name="Smith M."/>
            <person name="Spraggon L."/>
            <person name="Squares S.L."/>
            <person name="Steward C.A."/>
            <person name="Sycamore N."/>
            <person name="Tamlyn-Hall G."/>
            <person name="Tester J."/>
            <person name="Theaker A.J."/>
            <person name="Thomas D.W."/>
            <person name="Thorpe A."/>
            <person name="Tracey A."/>
            <person name="Tromans A."/>
            <person name="Tubby B."/>
            <person name="Wall M."/>
            <person name="Wallis J.M."/>
            <person name="West A.P."/>
            <person name="White S.S."/>
            <person name="Whitehead S.L."/>
            <person name="Whittaker H."/>
            <person name="Wild A."/>
            <person name="Willey D.J."/>
            <person name="Wilmer T.E."/>
            <person name="Wood J.M."/>
            <person name="Wray P.W."/>
            <person name="Wyatt J.C."/>
            <person name="Young L."/>
            <person name="Younger R.M."/>
            <person name="Bentley D.R."/>
            <person name="Coulson A."/>
            <person name="Durbin R.M."/>
            <person name="Hubbard T."/>
            <person name="Sulston J.E."/>
            <person name="Dunham I."/>
            <person name="Rogers J."/>
            <person name="Beck S."/>
        </authorList>
    </citation>
    <scope>NUCLEOTIDE SEQUENCE [LARGE SCALE GENOMIC DNA]</scope>
</reference>
<reference key="4">
    <citation type="submission" date="2005-09" db="EMBL/GenBank/DDBJ databases">
        <authorList>
            <person name="Mural R.J."/>
            <person name="Istrail S."/>
            <person name="Sutton G.G."/>
            <person name="Florea L."/>
            <person name="Halpern A.L."/>
            <person name="Mobarry C.M."/>
            <person name="Lippert R."/>
            <person name="Walenz B."/>
            <person name="Shatkay H."/>
            <person name="Dew I."/>
            <person name="Miller J.R."/>
            <person name="Flanigan M.J."/>
            <person name="Edwards N.J."/>
            <person name="Bolanos R."/>
            <person name="Fasulo D."/>
            <person name="Halldorsson B.V."/>
            <person name="Hannenhalli S."/>
            <person name="Turner R."/>
            <person name="Yooseph S."/>
            <person name="Lu F."/>
            <person name="Nusskern D.R."/>
            <person name="Shue B.C."/>
            <person name="Zheng X.H."/>
            <person name="Zhong F."/>
            <person name="Delcher A.L."/>
            <person name="Huson D.H."/>
            <person name="Kravitz S.A."/>
            <person name="Mouchard L."/>
            <person name="Reinert K."/>
            <person name="Remington K.A."/>
            <person name="Clark A.G."/>
            <person name="Waterman M.S."/>
            <person name="Eichler E.E."/>
            <person name="Adams M.D."/>
            <person name="Hunkapiller M.W."/>
            <person name="Myers E.W."/>
            <person name="Venter J.C."/>
        </authorList>
    </citation>
    <scope>NUCLEOTIDE SEQUENCE [LARGE SCALE GENOMIC DNA]</scope>
</reference>
<reference key="5">
    <citation type="journal article" date="2004" name="Genome Res.">
        <title>The status, quality, and expansion of the NIH full-length cDNA project: the Mammalian Gene Collection (MGC).</title>
        <authorList>
            <consortium name="The MGC Project Team"/>
        </authorList>
    </citation>
    <scope>NUCLEOTIDE SEQUENCE [LARGE SCALE MRNA] (ISOFORM 3)</scope>
    <source>
        <tissue>Placenta</tissue>
    </source>
</reference>
<reference key="6">
    <citation type="journal article" date="2020" name="Elife">
        <title>Cryo-EM structures and functional properties of CALHM channels of the human placenta.</title>
        <authorList>
            <person name="Drozdzyk K."/>
            <person name="Sawicka M."/>
            <person name="Bahamonde-Santos M.I."/>
            <person name="Jonas Z."/>
            <person name="Deneka D."/>
            <person name="Albrecht C."/>
            <person name="Dutzler R."/>
        </authorList>
    </citation>
    <scope>STRUCTURE BY ELECTRON MICROSCOPY (3.82 ANGSTROMS)</scope>
    <scope>DISULFIDE BONDS</scope>
    <scope>TOPOLOGY</scope>
    <scope>FUNCTION</scope>
    <scope>SUBUNIT</scope>
    <scope>SUBCELLULAR LOCATION</scope>
    <scope>TISSUE SPECIFICITY</scope>
</reference>
<keyword id="KW-0002">3D-structure</keyword>
<keyword id="KW-0025">Alternative splicing</keyword>
<keyword id="KW-1003">Cell membrane</keyword>
<keyword id="KW-1015">Disulfide bond</keyword>
<keyword id="KW-0407">Ion channel</keyword>
<keyword id="KW-0406">Ion transport</keyword>
<keyword id="KW-0472">Membrane</keyword>
<keyword id="KW-1267">Proteomics identification</keyword>
<keyword id="KW-1185">Reference proteome</keyword>
<keyword id="KW-0812">Transmembrane</keyword>
<keyword id="KW-1133">Transmembrane helix</keyword>
<keyword id="KW-0813">Transport</keyword>
<proteinExistence type="evidence at protein level"/>
<comment type="function">
    <text evidence="2">May assemble to form gap junction channel-like structures involved in intercellular communication. Channel gating and ion conductance are likely regulated by membrane lipids rather than by membrane depolarization or extracellular calcium levels.</text>
</comment>
<comment type="subunit">
    <text evidence="2">Oligomerizes to form decameric and undecameric channels. Two hemichannels can assemble in a tail-to-tail manner to form a gap junction.</text>
</comment>
<comment type="subcellular location">
    <subcellularLocation>
        <location evidence="7">Cell membrane</location>
        <topology evidence="1">Multi-pass membrane protein</topology>
    </subcellularLocation>
</comment>
<comment type="alternative products">
    <event type="alternative splicing"/>
    <isoform>
        <id>Q5JW98-1</id>
        <name>1</name>
        <sequence type="displayed"/>
    </isoform>
    <isoform>
        <id>Q5JW98-2</id>
        <name>2</name>
        <sequence type="described" ref="VSP_013817"/>
    </isoform>
    <isoform>
        <id>Q5JW98-3</id>
        <name>3</name>
        <sequence type="described" ref="VSP_018252"/>
    </isoform>
    <isoform>
        <id>Q5JW98-4</id>
        <name>4</name>
        <sequence type="described" ref="VSP_045216"/>
    </isoform>
</comment>
<comment type="tissue specificity">
    <text evidence="2">Placenta.</text>
</comment>
<comment type="similarity">
    <text evidence="6">Belongs to the CALHM family.</text>
</comment>
<sequence>MCPTLNNIVSSLQRNGIFINSLIAALTIGGQQLFSSSTFSCPCQVGKNFYYGSAFLVIPALILLVAGFALRSQMWTITGEYCCSCAPPYRRISPLECKLACLRFFSITGRAVIAPLTWLAVTLLTGTYYECAASEFASVDHYPMFDNVSASKREEILAGFPCCRSAPSDVILVRDEIALLHRYQSQMLGWILITLATIAALVSCCVAKCCSPLTSLQHCYWTSHLQNERELFEQAAEQHSRLLMMHRIKKLFGFIPGSEDVKHIRIPSCQDWKDISVPTLLCMGDDLQGHYSFLGNRVDEDNEEDRSRGIELKP</sequence>
<dbReference type="EMBL" id="AY358252">
    <property type="protein sequence ID" value="AAQ88619.1"/>
    <property type="molecule type" value="mRNA"/>
</dbReference>
<dbReference type="EMBL" id="AK056801">
    <property type="protein sequence ID" value="BAB71288.1"/>
    <property type="molecule type" value="mRNA"/>
</dbReference>
<dbReference type="EMBL" id="AK300309">
    <property type="protein sequence ID" value="BAG62062.1"/>
    <property type="molecule type" value="mRNA"/>
</dbReference>
<dbReference type="EMBL" id="AL121953">
    <property type="status" value="NOT_ANNOTATED_CDS"/>
    <property type="molecule type" value="Genomic_DNA"/>
</dbReference>
<dbReference type="EMBL" id="CH471051">
    <property type="protein sequence ID" value="EAW48223.1"/>
    <property type="molecule type" value="Genomic_DNA"/>
</dbReference>
<dbReference type="EMBL" id="CH471051">
    <property type="protein sequence ID" value="EAW48224.1"/>
    <property type="molecule type" value="Genomic_DNA"/>
</dbReference>
<dbReference type="EMBL" id="BC057769">
    <property type="protein sequence ID" value="AAH57769.2"/>
    <property type="molecule type" value="mRNA"/>
</dbReference>
<dbReference type="CCDS" id="CCDS5109.1">
    <molecule id="Q5JW98-2"/>
</dbReference>
<dbReference type="CCDS" id="CCDS59031.1">
    <molecule id="Q5JW98-4"/>
</dbReference>
<dbReference type="CCDS" id="CCDS59032.1">
    <molecule id="Q5JW98-3"/>
</dbReference>
<dbReference type="CCDS" id="CCDS93991.1">
    <molecule id="Q5JW98-1"/>
</dbReference>
<dbReference type="RefSeq" id="NP_001243816.1">
    <molecule id="Q5JW98-3"/>
    <property type="nucleotide sequence ID" value="NM_001256887.3"/>
</dbReference>
<dbReference type="RefSeq" id="NP_001243817.1">
    <molecule id="Q5JW98-4"/>
    <property type="nucleotide sequence ID" value="NM_001256888.3"/>
</dbReference>
<dbReference type="RefSeq" id="NP_001243818.1">
    <molecule id="Q5JW98-2"/>
    <property type="nucleotide sequence ID" value="NM_001256889.3"/>
</dbReference>
<dbReference type="RefSeq" id="NP_001353007.1">
    <molecule id="Q5JW98-1"/>
    <property type="nucleotide sequence ID" value="NM_001366078.2"/>
</dbReference>
<dbReference type="RefSeq" id="NP_694581.1">
    <molecule id="Q5JW98-2"/>
    <property type="nucleotide sequence ID" value="NM_153036.5"/>
</dbReference>
<dbReference type="RefSeq" id="XP_005266917.1">
    <property type="nucleotide sequence ID" value="XM_005266860.3"/>
</dbReference>
<dbReference type="PDB" id="6YTK">
    <property type="method" value="EM"/>
    <property type="resolution" value="4.07 A"/>
    <property type="chains" value="A/B/C/D/E/F/G/H/I/J/K/L/M/N/O/P/Q/R/S/T=1-314"/>
</dbReference>
<dbReference type="PDB" id="6YTL">
    <property type="method" value="EM"/>
    <property type="resolution" value="3.82 A"/>
    <property type="chains" value="A/B/C/D/E/F/G/H/I/J/K/L/M/N/O/P/Q/R/S/T/U/V=1-314"/>
</dbReference>
<dbReference type="PDB" id="6YTO">
    <property type="method" value="EM"/>
    <property type="resolution" value="4.24 A"/>
    <property type="chains" value="A/B/C/D/E/F/G/H/I/J/K/L/M/N/O/P/Q/R/S/T=1-314"/>
</dbReference>
<dbReference type="PDB" id="6YTQ">
    <property type="method" value="EM"/>
    <property type="resolution" value="4.02 A"/>
    <property type="chains" value="A/B/C/D/E/F/G/H/I/J/K/L/M/N/O/P/Q/R/S/T/U/V=1-314"/>
</dbReference>
<dbReference type="PDB" id="8RML">
    <property type="method" value="EM"/>
    <property type="resolution" value="3.84 A"/>
    <property type="chains" value="A/B/K=2-314"/>
</dbReference>
<dbReference type="PDB" id="8RMM">
    <property type="method" value="EM"/>
    <property type="resolution" value="3.26 A"/>
    <property type="chains" value="A/B/K=2-314"/>
</dbReference>
<dbReference type="PDB" id="8RMN">
    <property type="method" value="EM"/>
    <property type="resolution" value="3.80 A"/>
    <property type="chains" value="A/B/C/D/E/F/G/H/I/J/K/L/M/N/O/P/Q/R/S/T=2-314"/>
</dbReference>
<dbReference type="PDBsum" id="6YTK"/>
<dbReference type="PDBsum" id="6YTL"/>
<dbReference type="PDBsum" id="6YTO"/>
<dbReference type="PDBsum" id="6YTQ"/>
<dbReference type="PDBsum" id="8RML"/>
<dbReference type="PDBsum" id="8RMM"/>
<dbReference type="PDBsum" id="8RMN"/>
<dbReference type="EMDB" id="EMD-10917"/>
<dbReference type="EMDB" id="EMD-10919"/>
<dbReference type="EMDB" id="EMD-10920"/>
<dbReference type="EMDB" id="EMD-10921"/>
<dbReference type="EMDB" id="EMD-19363"/>
<dbReference type="EMDB" id="EMD-19364"/>
<dbReference type="EMDB" id="EMD-19365"/>
<dbReference type="SMR" id="Q5JW98"/>
<dbReference type="BioGRID" id="128707">
    <property type="interactions" value="62"/>
</dbReference>
<dbReference type="FunCoup" id="Q5JW98">
    <property type="interactions" value="121"/>
</dbReference>
<dbReference type="IntAct" id="Q5JW98">
    <property type="interactions" value="39"/>
</dbReference>
<dbReference type="STRING" id="9606.ENSP00000385836"/>
<dbReference type="TCDB" id="1.A.84.1.5">
    <property type="family name" value="the calcium homeostasis modulator ca(2+) channel (calhm-c) family"/>
</dbReference>
<dbReference type="PhosphoSitePlus" id="Q5JW98"/>
<dbReference type="BioMuta" id="CALHM4"/>
<dbReference type="DMDM" id="67460441"/>
<dbReference type="jPOST" id="Q5JW98"/>
<dbReference type="MassIVE" id="Q5JW98"/>
<dbReference type="PaxDb" id="9606-ENSP00000385836"/>
<dbReference type="PeptideAtlas" id="Q5JW98"/>
<dbReference type="ProteomicsDB" id="5119"/>
<dbReference type="ProteomicsDB" id="63378">
    <molecule id="Q5JW98-1"/>
</dbReference>
<dbReference type="ProteomicsDB" id="63379">
    <molecule id="Q5JW98-2"/>
</dbReference>
<dbReference type="ProteomicsDB" id="63380">
    <molecule id="Q5JW98-3"/>
</dbReference>
<dbReference type="Pumba" id="Q5JW98"/>
<dbReference type="Antibodypedia" id="19425">
    <property type="antibodies" value="4 antibodies from 3 providers"/>
</dbReference>
<dbReference type="DNASU" id="221301"/>
<dbReference type="Ensembl" id="ENST00000368596.4">
    <molecule id="Q5JW98-1"/>
    <property type="protein sequence ID" value="ENSP00000357585.3"/>
    <property type="gene ID" value="ENSG00000164451.14"/>
</dbReference>
<dbReference type="Ensembl" id="ENST00000368597.6">
    <molecule id="Q5JW98-2"/>
    <property type="protein sequence ID" value="ENSP00000357586.2"/>
    <property type="gene ID" value="ENSG00000164451.14"/>
</dbReference>
<dbReference type="Ensembl" id="ENST00000405399.5">
    <molecule id="Q5JW98-3"/>
    <property type="protein sequence ID" value="ENSP00000385836.1"/>
    <property type="gene ID" value="ENSG00000164451.14"/>
</dbReference>
<dbReference type="Ensembl" id="ENST00000628083.1">
    <molecule id="Q5JW98-4"/>
    <property type="protein sequence ID" value="ENSP00000487169.1"/>
    <property type="gene ID" value="ENSG00000164451.14"/>
</dbReference>
<dbReference type="GeneID" id="221301"/>
<dbReference type="KEGG" id="hsa:221301"/>
<dbReference type="MANE-Select" id="ENST00000368596.4">
    <property type="protein sequence ID" value="ENSP00000357585.3"/>
    <property type="RefSeq nucleotide sequence ID" value="NM_001366078.2"/>
    <property type="RefSeq protein sequence ID" value="NP_001353007.1"/>
</dbReference>
<dbReference type="UCSC" id="uc003pwz.5">
    <molecule id="Q5JW98-1"/>
    <property type="organism name" value="human"/>
</dbReference>
<dbReference type="AGR" id="HGNC:21094"/>
<dbReference type="CTD" id="221301"/>
<dbReference type="GeneCards" id="CALHM4"/>
<dbReference type="HGNC" id="HGNC:21094">
    <property type="gene designation" value="CALHM4"/>
</dbReference>
<dbReference type="HPA" id="ENSG00000164451">
    <property type="expression patterns" value="Tissue enriched (placenta)"/>
</dbReference>
<dbReference type="neXtProt" id="NX_Q5JW98"/>
<dbReference type="OpenTargets" id="ENSG00000164451"/>
<dbReference type="PharmGKB" id="PA162387625"/>
<dbReference type="VEuPathDB" id="HostDB:ENSG00000164451"/>
<dbReference type="eggNOG" id="ENOG502RKQ2">
    <property type="taxonomic scope" value="Eukaryota"/>
</dbReference>
<dbReference type="GeneTree" id="ENSGT01030000234610"/>
<dbReference type="HOGENOM" id="CLU_069286_3_1_1"/>
<dbReference type="InParanoid" id="Q5JW98"/>
<dbReference type="OMA" id="FRCPCQV"/>
<dbReference type="OrthoDB" id="9827748at2759"/>
<dbReference type="PAN-GO" id="Q5JW98">
    <property type="GO annotations" value="2 GO annotations based on evolutionary models"/>
</dbReference>
<dbReference type="PhylomeDB" id="Q5JW98"/>
<dbReference type="PathwayCommons" id="Q5JW98"/>
<dbReference type="SignaLink" id="Q5JW98"/>
<dbReference type="BioGRID-ORCS" id="221301">
    <property type="hits" value="14 hits in 1135 CRISPR screens"/>
</dbReference>
<dbReference type="GenomeRNAi" id="221301"/>
<dbReference type="Pharos" id="Q5JW98">
    <property type="development level" value="Tdark"/>
</dbReference>
<dbReference type="PRO" id="PR:Q5JW98"/>
<dbReference type="Proteomes" id="UP000005640">
    <property type="component" value="Chromosome 6"/>
</dbReference>
<dbReference type="RNAct" id="Q5JW98">
    <property type="molecule type" value="protein"/>
</dbReference>
<dbReference type="Bgee" id="ENSG00000164451">
    <property type="expression patterns" value="Expressed in placenta and 40 other cell types or tissues"/>
</dbReference>
<dbReference type="ExpressionAtlas" id="Q5JW98">
    <property type="expression patterns" value="baseline and differential"/>
</dbReference>
<dbReference type="GO" id="GO:0005886">
    <property type="term" value="C:plasma membrane"/>
    <property type="evidence" value="ECO:0000318"/>
    <property type="project" value="GO_Central"/>
</dbReference>
<dbReference type="GO" id="GO:0005261">
    <property type="term" value="F:monoatomic cation channel activity"/>
    <property type="evidence" value="ECO:0000318"/>
    <property type="project" value="GO_Central"/>
</dbReference>
<dbReference type="GO" id="GO:1904669">
    <property type="term" value="P:ATP export"/>
    <property type="evidence" value="ECO:0007669"/>
    <property type="project" value="UniProtKB-ARBA"/>
</dbReference>
<dbReference type="InterPro" id="IPR029569">
    <property type="entry name" value="CALHM"/>
</dbReference>
<dbReference type="PANTHER" id="PTHR32261">
    <property type="entry name" value="CALCIUM HOMEOSTASIS MODULATOR PROTEIN"/>
    <property type="match status" value="1"/>
</dbReference>
<dbReference type="PANTHER" id="PTHR32261:SF5">
    <property type="entry name" value="CALCIUM HOMEOSTASIS MODULATOR PROTEIN 4"/>
    <property type="match status" value="1"/>
</dbReference>
<dbReference type="Pfam" id="PF14798">
    <property type="entry name" value="Ca_hom_mod"/>
    <property type="match status" value="1"/>
</dbReference>
<feature type="chain" id="PRO_0000186724" description="Calcium homeostasis modulator protein 4">
    <location>
        <begin position="1"/>
        <end position="314"/>
    </location>
</feature>
<feature type="topological domain" description="Cytoplasmic" evidence="6">
    <location>
        <begin position="1"/>
        <end position="14"/>
    </location>
</feature>
<feature type="transmembrane region" description="Helical; Name=S1" evidence="2 9">
    <location>
        <begin position="15"/>
        <end position="37"/>
    </location>
</feature>
<feature type="topological domain" description="Extracellular" evidence="6">
    <location>
        <begin position="38"/>
        <end position="48"/>
    </location>
</feature>
<feature type="transmembrane region" description="Helical; Name=S2" evidence="2 9">
    <location>
        <begin position="49"/>
        <end position="71"/>
    </location>
</feature>
<feature type="topological domain" description="Cytoplasmic" evidence="6">
    <location>
        <begin position="72"/>
        <end position="103"/>
    </location>
</feature>
<feature type="transmembrane region" description="Helical; Name=S3" evidence="2 9">
    <location>
        <begin position="104"/>
        <end position="129"/>
    </location>
</feature>
<feature type="topological domain" description="Extracellular" evidence="6">
    <location>
        <begin position="130"/>
        <end position="183"/>
    </location>
</feature>
<feature type="transmembrane region" description="Helical; Name=S4" evidence="2 9">
    <location>
        <begin position="184"/>
        <end position="207"/>
    </location>
</feature>
<feature type="topological domain" description="Cytoplasmic" evidence="6">
    <location>
        <begin position="208"/>
        <end position="314"/>
    </location>
</feature>
<feature type="disulfide bond" evidence="2 9">
    <location>
        <begin position="41"/>
        <end position="131"/>
    </location>
</feature>
<feature type="disulfide bond" evidence="2 9">
    <location>
        <begin position="43"/>
        <end position="162"/>
    </location>
</feature>
<feature type="splice variant" id="VSP_013817" description="In isoform 2." evidence="3 4">
    <location>
        <begin position="1"/>
        <end position="186"/>
    </location>
</feature>
<feature type="splice variant" id="VSP_045216" description="In isoform 4." evidence="4">
    <original>MCPTLNNIVSSLQRNGIFINSLIAALTIGGQQLFSSSTFSCPCQVGKNFYYGSAFLVIPALILLVAGFALRSQMWTITGEYCCSCAPPYRRISPLECKLACLRFFSITGRAVIAPLTWLAVTLLTGTYYECAASEFASVDHYPMFDNVSASKREEILAGFPCCR</original>
    <variation>MAPRSAKETFRINPNVAANL</variation>
    <location>
        <begin position="1"/>
        <end position="164"/>
    </location>
</feature>
<feature type="splice variant" id="VSP_018252" description="In isoform 3." evidence="5">
    <location>
        <begin position="1"/>
        <end position="143"/>
    </location>
</feature>
<feature type="helix" evidence="10">
    <location>
        <begin position="6"/>
        <end position="14"/>
    </location>
</feature>
<feature type="helix" evidence="10">
    <location>
        <begin position="16"/>
        <end position="37"/>
    </location>
</feature>
<feature type="strand" evidence="10">
    <location>
        <begin position="45"/>
        <end position="47"/>
    </location>
</feature>
<feature type="helix" evidence="10">
    <location>
        <begin position="49"/>
        <end position="69"/>
    </location>
</feature>
<feature type="helix" evidence="10">
    <location>
        <begin position="72"/>
        <end position="81"/>
    </location>
</feature>
<feature type="helix" evidence="10">
    <location>
        <begin position="95"/>
        <end position="106"/>
    </location>
</feature>
<feature type="helix" evidence="10">
    <location>
        <begin position="108"/>
        <end position="125"/>
    </location>
</feature>
<feature type="helix" evidence="10">
    <location>
        <begin position="127"/>
        <end position="132"/>
    </location>
</feature>
<feature type="helix" evidence="10">
    <location>
        <begin position="143"/>
        <end position="145"/>
    </location>
</feature>
<feature type="helix" evidence="10">
    <location>
        <begin position="152"/>
        <end position="159"/>
    </location>
</feature>
<feature type="turn" evidence="10">
    <location>
        <begin position="160"/>
        <end position="163"/>
    </location>
</feature>
<feature type="helix" evidence="10">
    <location>
        <begin position="171"/>
        <end position="207"/>
    </location>
</feature>
<feature type="helix" evidence="10">
    <location>
        <begin position="217"/>
        <end position="252"/>
    </location>
</feature>
<feature type="helix" evidence="10">
    <location>
        <begin position="269"/>
        <end position="272"/>
    </location>
</feature>
<feature type="helix" evidence="10">
    <location>
        <begin position="274"/>
        <end position="276"/>
    </location>
</feature>